<keyword id="KW-0067">ATP-binding</keyword>
<keyword id="KW-0472">Membrane</keyword>
<keyword id="KW-0547">Nucleotide-binding</keyword>
<keyword id="KW-1185">Reference proteome</keyword>
<keyword id="KW-0677">Repeat</keyword>
<keyword id="KW-0812">Transmembrane</keyword>
<keyword id="KW-1133">Transmembrane helix</keyword>
<keyword id="KW-0813">Transport</keyword>
<accession>Q54TV1</accession>
<accession>Q8T687</accession>
<sequence length="1534" mass="173651">MAKQDPKDKNSDSPNLSIPINNNNNENLDNDQELLNNNNNNNNNNNNNNNNNNNNNNNNNNNNNLISSSRKHKDEESNYDSDDEKSVYQIAKEHEGEDDGDDEYFPIPLDELMPNHENDELTKKIKQTRPEDKTGLYVYCRNATYTVKHRENKKVKIKLIDDISFYLKPKEMTLILGTPGCGKSTIFQMLAGQLKDKHFKGELLFNGHPINHKNHHRDISYVTQDDIHVPTLTVKETFRFALDCLGRKELTNEEKKETVDNCMNLLGLKESENTVVGDNFVRGISGGQKKRVTIGVGVIKGSNLLLMDEPTSGLDSSTSFEILSDVKKFVTYGYSPALITLLQPSVQLTSLFDNLMILNKGRICYFGPMNKALGYFKKLGFACPSHNNPAEFFQEVVDAPERYSFIHPPKCKTSKDFVRAYRESEFYKDLMEKMDANKDGIVDDNKPKVLVDSTAKELGMYPHGIGYQTKICMKRGFTMIRRNYYNFLTRVAKGIFFGLLLGTLYWRIGHNQSGGMERFGLLFFIMVTIIFSSFAAVNSFFGERKVFYSQKALYYYKTGAYFISSIICDIPAGILEVAFFGPIVYWLANLRPVFIRFVYFMLLLIMTDNLSLSFAKMCAAISPTIEIANVIASVILSIWLLFSGFTAPKNDIGGWWIWLYYISPYTWIFQGLSINEFTYQEYGCKTSELIPPRTPQNLLPYPEGFGGNQVCQFTSGEQIMDAFGITNPNYFKWVVFGILSAYIVFFYVVCFFALKYFNFEDKKSKLAVKKLKKKKKVKTTKQDEESAAISSEALERIDDDNDDDADYETEIKKKKSHKKQKEDTVIDVKSPSSLTTGSPYYNINNNNNNLSGSGNNIKKRKVKTPSNLSPSVNSPITINSPMPTSPSNNNNNNNSNEKSKNGKDIGSETGSYLQFKKLCYAVDVKVDDPDNPKKKKSQRLQLLTDIDGYVKPGQMLALMGPSGAGKSTLLDVLAQRKTGGHITGEILINGKPPSEFTNRIRAYVEQMDVLPPTQTVREAIAFSARCRLPPEVTKEERESYVDKIVEVLSLSSIKDLKIGVLGDGLSVSQRKRVNIGVELASNPEILFLDEPTSGLDSGDAFKVIDVVNKIAKVMNRTVICTVHQPSAAIFEFFDQLLLLKQGGETIYFGPLGNQSSVILDYCDKLGMHIKPHINPADFVMTLADQGKMVEGPNGEQVPLDAKKAYFESDICKKEYEIMEGQLIPDDFVIKTYDSRFASSWMTQFRALCMRSWLSRLRRPAIFVSNCIRSILLAVLLGTLFVRMDYEQKDARSRVSLLFFSFLFAGMVAIGNIPTTVLERGVFYREVTAGFYHSTAYMTSYVLTSYPFTLSTGILYIIPTFWIAGLDSGRHSSKFWYCLFIFIITYVMYDAFGLCLAVCLPNEVMASTICGIGLSLSTLFGGFVIARPNYPSAYYWCHYLDWLRYPLEASCTNEFTGLTFVCTNNKGAVPIPIIENGVQIAIKYYCPITNGDDFMLTYGFHKFMRYIDIAAIFGYIFIFVGLSFWGFKKIRWFNR</sequence>
<evidence type="ECO:0000250" key="1"/>
<evidence type="ECO:0000255" key="2"/>
<evidence type="ECO:0000255" key="3">
    <source>
        <dbReference type="PROSITE-ProRule" id="PRU00434"/>
    </source>
</evidence>
<evidence type="ECO:0000256" key="4">
    <source>
        <dbReference type="SAM" id="MobiDB-lite"/>
    </source>
</evidence>
<evidence type="ECO:0000305" key="5"/>
<dbReference type="EMBL" id="AAFI02000041">
    <property type="protein sequence ID" value="EAL66676.1"/>
    <property type="molecule type" value="Genomic_DNA"/>
</dbReference>
<dbReference type="EMBL" id="AF482385">
    <property type="protein sequence ID" value="AAL91491.1"/>
    <property type="molecule type" value="Genomic_DNA"/>
</dbReference>
<dbReference type="RefSeq" id="XP_640710.1">
    <property type="nucleotide sequence ID" value="XM_635618.1"/>
</dbReference>
<dbReference type="SMR" id="Q54TV1"/>
<dbReference type="FunCoup" id="Q54TV1">
    <property type="interactions" value="5"/>
</dbReference>
<dbReference type="STRING" id="44689.Q54TV1"/>
<dbReference type="PaxDb" id="44689-DDB0215376"/>
<dbReference type="EnsemblProtists" id="EAL66676">
    <property type="protein sequence ID" value="EAL66676"/>
    <property type="gene ID" value="DDB_G0281389"/>
</dbReference>
<dbReference type="GeneID" id="8623097"/>
<dbReference type="KEGG" id="ddi:DDB_G0281389"/>
<dbReference type="dictyBase" id="DDB_G0281389">
    <property type="gene designation" value="abcG6"/>
</dbReference>
<dbReference type="VEuPathDB" id="AmoebaDB:DDB_G0281389"/>
<dbReference type="eggNOG" id="KOG0065">
    <property type="taxonomic scope" value="Eukaryota"/>
</dbReference>
<dbReference type="HOGENOM" id="CLU_000604_35_3_1"/>
<dbReference type="InParanoid" id="Q54TV1"/>
<dbReference type="OMA" id="RNFGFIC"/>
<dbReference type="PhylomeDB" id="Q54TV1"/>
<dbReference type="PRO" id="PR:Q54TV1"/>
<dbReference type="Proteomes" id="UP000002195">
    <property type="component" value="Chromosome 3"/>
</dbReference>
<dbReference type="GO" id="GO:0016020">
    <property type="term" value="C:membrane"/>
    <property type="evidence" value="ECO:0007669"/>
    <property type="project" value="UniProtKB-SubCell"/>
</dbReference>
<dbReference type="GO" id="GO:0140359">
    <property type="term" value="F:ABC-type transporter activity"/>
    <property type="evidence" value="ECO:0007669"/>
    <property type="project" value="InterPro"/>
</dbReference>
<dbReference type="GO" id="GO:0005524">
    <property type="term" value="F:ATP binding"/>
    <property type="evidence" value="ECO:0007669"/>
    <property type="project" value="UniProtKB-KW"/>
</dbReference>
<dbReference type="GO" id="GO:0016887">
    <property type="term" value="F:ATP hydrolysis activity"/>
    <property type="evidence" value="ECO:0007669"/>
    <property type="project" value="InterPro"/>
</dbReference>
<dbReference type="GO" id="GO:0042626">
    <property type="term" value="F:ATPase-coupled transmembrane transporter activity"/>
    <property type="evidence" value="ECO:0000317"/>
    <property type="project" value="dictyBase"/>
</dbReference>
<dbReference type="GO" id="GO:0031152">
    <property type="term" value="P:aggregation involved in sorocarp development"/>
    <property type="evidence" value="ECO:0000318"/>
    <property type="project" value="GO_Central"/>
</dbReference>
<dbReference type="GO" id="GO:0031288">
    <property type="term" value="P:sorocarp morphogenesis"/>
    <property type="evidence" value="ECO:0000315"/>
    <property type="project" value="dictyBase"/>
</dbReference>
<dbReference type="CDD" id="cd03232">
    <property type="entry name" value="ABCG_PDR_domain2"/>
    <property type="match status" value="1"/>
</dbReference>
<dbReference type="FunFam" id="3.40.50.300:FF:000054">
    <property type="entry name" value="ABC multidrug transporter atrF"/>
    <property type="match status" value="1"/>
</dbReference>
<dbReference type="FunFam" id="3.40.50.300:FF:002639">
    <property type="entry name" value="ABC transporter G family protein"/>
    <property type="match status" value="1"/>
</dbReference>
<dbReference type="Gene3D" id="3.40.50.300">
    <property type="entry name" value="P-loop containing nucleotide triphosphate hydrolases"/>
    <property type="match status" value="2"/>
</dbReference>
<dbReference type="InterPro" id="IPR003593">
    <property type="entry name" value="AAA+_ATPase"/>
</dbReference>
<dbReference type="InterPro" id="IPR013525">
    <property type="entry name" value="ABC2_TM"/>
</dbReference>
<dbReference type="InterPro" id="IPR003439">
    <property type="entry name" value="ABC_transporter-like_ATP-bd"/>
</dbReference>
<dbReference type="InterPro" id="IPR017871">
    <property type="entry name" value="ABC_transporter-like_CS"/>
</dbReference>
<dbReference type="InterPro" id="IPR043926">
    <property type="entry name" value="ABCG_dom"/>
</dbReference>
<dbReference type="InterPro" id="IPR034003">
    <property type="entry name" value="ABCG_PDR_2"/>
</dbReference>
<dbReference type="InterPro" id="IPR027417">
    <property type="entry name" value="P-loop_NTPase"/>
</dbReference>
<dbReference type="InterPro" id="IPR013581">
    <property type="entry name" value="PDR_assoc"/>
</dbReference>
<dbReference type="PANTHER" id="PTHR19241">
    <property type="entry name" value="ATP-BINDING CASSETTE TRANSPORTER"/>
    <property type="match status" value="1"/>
</dbReference>
<dbReference type="Pfam" id="PF01061">
    <property type="entry name" value="ABC2_membrane"/>
    <property type="match status" value="2"/>
</dbReference>
<dbReference type="Pfam" id="PF19055">
    <property type="entry name" value="ABC2_membrane_7"/>
    <property type="match status" value="2"/>
</dbReference>
<dbReference type="Pfam" id="PF00005">
    <property type="entry name" value="ABC_tran"/>
    <property type="match status" value="2"/>
</dbReference>
<dbReference type="Pfam" id="PF08370">
    <property type="entry name" value="PDR_assoc"/>
    <property type="match status" value="1"/>
</dbReference>
<dbReference type="SMART" id="SM00382">
    <property type="entry name" value="AAA"/>
    <property type="match status" value="2"/>
</dbReference>
<dbReference type="SUPFAM" id="SSF52540">
    <property type="entry name" value="P-loop containing nucleoside triphosphate hydrolases"/>
    <property type="match status" value="3"/>
</dbReference>
<dbReference type="PROSITE" id="PS00211">
    <property type="entry name" value="ABC_TRANSPORTER_1"/>
    <property type="match status" value="1"/>
</dbReference>
<dbReference type="PROSITE" id="PS50893">
    <property type="entry name" value="ABC_TRANSPORTER_2"/>
    <property type="match status" value="2"/>
</dbReference>
<proteinExistence type="inferred from homology"/>
<protein>
    <recommendedName>
        <fullName>ABC transporter G family member 6</fullName>
    </recommendedName>
    <alternativeName>
        <fullName>ABC transporter ABCG.6</fullName>
    </alternativeName>
</protein>
<reference key="1">
    <citation type="journal article" date="2005" name="Nature">
        <title>The genome of the social amoeba Dictyostelium discoideum.</title>
        <authorList>
            <person name="Eichinger L."/>
            <person name="Pachebat J.A."/>
            <person name="Gloeckner G."/>
            <person name="Rajandream M.A."/>
            <person name="Sucgang R."/>
            <person name="Berriman M."/>
            <person name="Song J."/>
            <person name="Olsen R."/>
            <person name="Szafranski K."/>
            <person name="Xu Q."/>
            <person name="Tunggal B."/>
            <person name="Kummerfeld S."/>
            <person name="Madera M."/>
            <person name="Konfortov B.A."/>
            <person name="Rivero F."/>
            <person name="Bankier A.T."/>
            <person name="Lehmann R."/>
            <person name="Hamlin N."/>
            <person name="Davies R."/>
            <person name="Gaudet P."/>
            <person name="Fey P."/>
            <person name="Pilcher K."/>
            <person name="Chen G."/>
            <person name="Saunders D."/>
            <person name="Sodergren E.J."/>
            <person name="Davis P."/>
            <person name="Kerhornou A."/>
            <person name="Nie X."/>
            <person name="Hall N."/>
            <person name="Anjard C."/>
            <person name="Hemphill L."/>
            <person name="Bason N."/>
            <person name="Farbrother P."/>
            <person name="Desany B."/>
            <person name="Just E."/>
            <person name="Morio T."/>
            <person name="Rost R."/>
            <person name="Churcher C.M."/>
            <person name="Cooper J."/>
            <person name="Haydock S."/>
            <person name="van Driessche N."/>
            <person name="Cronin A."/>
            <person name="Goodhead I."/>
            <person name="Muzny D.M."/>
            <person name="Mourier T."/>
            <person name="Pain A."/>
            <person name="Lu M."/>
            <person name="Harper D."/>
            <person name="Lindsay R."/>
            <person name="Hauser H."/>
            <person name="James K.D."/>
            <person name="Quiles M."/>
            <person name="Madan Babu M."/>
            <person name="Saito T."/>
            <person name="Buchrieser C."/>
            <person name="Wardroper A."/>
            <person name="Felder M."/>
            <person name="Thangavelu M."/>
            <person name="Johnson D."/>
            <person name="Knights A."/>
            <person name="Loulseged H."/>
            <person name="Mungall K.L."/>
            <person name="Oliver K."/>
            <person name="Price C."/>
            <person name="Quail M.A."/>
            <person name="Urushihara H."/>
            <person name="Hernandez J."/>
            <person name="Rabbinowitsch E."/>
            <person name="Steffen D."/>
            <person name="Sanders M."/>
            <person name="Ma J."/>
            <person name="Kohara Y."/>
            <person name="Sharp S."/>
            <person name="Simmonds M.N."/>
            <person name="Spiegler S."/>
            <person name="Tivey A."/>
            <person name="Sugano S."/>
            <person name="White B."/>
            <person name="Walker D."/>
            <person name="Woodward J.R."/>
            <person name="Winckler T."/>
            <person name="Tanaka Y."/>
            <person name="Shaulsky G."/>
            <person name="Schleicher M."/>
            <person name="Weinstock G.M."/>
            <person name="Rosenthal A."/>
            <person name="Cox E.C."/>
            <person name="Chisholm R.L."/>
            <person name="Gibbs R.A."/>
            <person name="Loomis W.F."/>
            <person name="Platzer M."/>
            <person name="Kay R.R."/>
            <person name="Williams J.G."/>
            <person name="Dear P.H."/>
            <person name="Noegel A.A."/>
            <person name="Barrell B.G."/>
            <person name="Kuspa A."/>
        </authorList>
    </citation>
    <scope>NUCLEOTIDE SEQUENCE [LARGE SCALE GENOMIC DNA]</scope>
    <source>
        <strain>AX4</strain>
    </source>
</reference>
<reference key="2">
    <citation type="journal article" date="2002" name="Eukaryot. Cell">
        <title>Evolutionary analyses of ABC transporters of Dictyostelium discoideum.</title>
        <authorList>
            <person name="Anjard C."/>
            <person name="Loomis W.F."/>
        </authorList>
    </citation>
    <scope>NUCLEOTIDE SEQUENCE [GENOMIC DNA] OF 15-1534</scope>
    <scope>NOMENCLATURE</scope>
    <source>
        <strain>AX4</strain>
    </source>
</reference>
<gene>
    <name type="primary">abcG6</name>
    <name type="ORF">DDB_G0281389</name>
</gene>
<feature type="chain" id="PRO_0000330364" description="ABC transporter G family member 6">
    <location>
        <begin position="1"/>
        <end position="1534"/>
    </location>
</feature>
<feature type="transmembrane region" description="Helical" evidence="2">
    <location>
        <begin position="486"/>
        <end position="506"/>
    </location>
</feature>
<feature type="transmembrane region" description="Helical" evidence="2">
    <location>
        <begin position="521"/>
        <end position="541"/>
    </location>
</feature>
<feature type="transmembrane region" description="Helical" evidence="2">
    <location>
        <begin position="566"/>
        <end position="586"/>
    </location>
</feature>
<feature type="transmembrane region" description="Helical" evidence="2">
    <location>
        <begin position="592"/>
        <end position="612"/>
    </location>
</feature>
<feature type="transmembrane region" description="Helical" evidence="2">
    <location>
        <begin position="625"/>
        <end position="645"/>
    </location>
</feature>
<feature type="transmembrane region" description="Helical" evidence="2">
    <location>
        <begin position="652"/>
        <end position="672"/>
    </location>
</feature>
<feature type="transmembrane region" description="Helical" evidence="2">
    <location>
        <begin position="734"/>
        <end position="754"/>
    </location>
</feature>
<feature type="transmembrane region" description="Helical" evidence="2">
    <location>
        <begin position="1261"/>
        <end position="1281"/>
    </location>
</feature>
<feature type="transmembrane region" description="Helical" evidence="2">
    <location>
        <begin position="1296"/>
        <end position="1316"/>
    </location>
</feature>
<feature type="transmembrane region" description="Helical" evidence="2">
    <location>
        <begin position="1345"/>
        <end position="1365"/>
    </location>
</feature>
<feature type="transmembrane region" description="Helical" evidence="2">
    <location>
        <begin position="1377"/>
        <end position="1397"/>
    </location>
</feature>
<feature type="transmembrane region" description="Helical" evidence="2">
    <location>
        <begin position="1404"/>
        <end position="1424"/>
    </location>
</feature>
<feature type="transmembrane region" description="Helical" evidence="2">
    <location>
        <begin position="1506"/>
        <end position="1526"/>
    </location>
</feature>
<feature type="domain" description="ABC transporter 1" evidence="3">
    <location>
        <begin position="138"/>
        <end position="385"/>
    </location>
</feature>
<feature type="domain" description="ABC transmembrane type-2 1">
    <location>
        <begin position="481"/>
        <end position="757"/>
    </location>
</feature>
<feature type="domain" description="ABC transporter 2" evidence="3">
    <location>
        <begin position="924"/>
        <end position="1166"/>
    </location>
</feature>
<feature type="domain" description="ABC transmembrane type-2 2">
    <location>
        <begin position="1256"/>
        <end position="1529"/>
    </location>
</feature>
<feature type="region of interest" description="Disordered" evidence="4">
    <location>
        <begin position="1"/>
        <end position="85"/>
    </location>
</feature>
<feature type="region of interest" description="Disordered" evidence="4">
    <location>
        <begin position="781"/>
        <end position="907"/>
    </location>
</feature>
<feature type="compositionally biased region" description="Basic and acidic residues" evidence="4">
    <location>
        <begin position="1"/>
        <end position="11"/>
    </location>
</feature>
<feature type="compositionally biased region" description="Low complexity" evidence="4">
    <location>
        <begin position="21"/>
        <end position="65"/>
    </location>
</feature>
<feature type="compositionally biased region" description="Acidic residues" evidence="4">
    <location>
        <begin position="797"/>
        <end position="808"/>
    </location>
</feature>
<feature type="compositionally biased region" description="Polar residues" evidence="4">
    <location>
        <begin position="830"/>
        <end position="841"/>
    </location>
</feature>
<feature type="compositionally biased region" description="Low complexity" evidence="4">
    <location>
        <begin position="842"/>
        <end position="856"/>
    </location>
</feature>
<feature type="compositionally biased region" description="Polar residues" evidence="4">
    <location>
        <begin position="864"/>
        <end position="873"/>
    </location>
</feature>
<feature type="compositionally biased region" description="Low complexity" evidence="4">
    <location>
        <begin position="874"/>
        <end position="896"/>
    </location>
</feature>
<feature type="compositionally biased region" description="Basic and acidic residues" evidence="4">
    <location>
        <begin position="897"/>
        <end position="906"/>
    </location>
</feature>
<feature type="binding site" evidence="3">
    <location>
        <begin position="177"/>
        <end position="184"/>
    </location>
    <ligand>
        <name>ATP</name>
        <dbReference type="ChEBI" id="CHEBI:30616"/>
        <label>1</label>
    </ligand>
</feature>
<feature type="binding site" evidence="3">
    <location>
        <begin position="960"/>
        <end position="967"/>
    </location>
    <ligand>
        <name>ATP</name>
        <dbReference type="ChEBI" id="CHEBI:30616"/>
        <label>2</label>
    </ligand>
</feature>
<feature type="sequence conflict" description="In Ref. 2; AAL91491." evidence="5" ref="2">
    <original>I</original>
    <variation>L</variation>
    <location>
        <position position="18"/>
    </location>
</feature>
<feature type="sequence conflict" description="In Ref. 2; AAL91491." evidence="5" ref="2">
    <original>NN</original>
    <variation>II</variation>
    <location>
        <begin position="51"/>
        <end position="52"/>
    </location>
</feature>
<feature type="sequence conflict" description="In Ref. 2; AAL91491." evidence="5" ref="2">
    <original>T</original>
    <variation>P</variation>
    <location>
        <position position="824"/>
    </location>
</feature>
<comment type="subcellular location">
    <subcellularLocation>
        <location evidence="1">Membrane</location>
        <topology evidence="1">Multi-pass membrane protein</topology>
    </subcellularLocation>
</comment>
<comment type="similarity">
    <text evidence="5">Belongs to the ABC transporter superfamily. ABCG family. PDR (TC 3.A.1.205) subfamily.</text>
</comment>
<organism>
    <name type="scientific">Dictyostelium discoideum</name>
    <name type="common">Social amoeba</name>
    <dbReference type="NCBI Taxonomy" id="44689"/>
    <lineage>
        <taxon>Eukaryota</taxon>
        <taxon>Amoebozoa</taxon>
        <taxon>Evosea</taxon>
        <taxon>Eumycetozoa</taxon>
        <taxon>Dictyostelia</taxon>
        <taxon>Dictyosteliales</taxon>
        <taxon>Dictyosteliaceae</taxon>
        <taxon>Dictyostelium</taxon>
    </lineage>
</organism>
<name>ABCG6_DICDI</name>